<feature type="chain" id="PRO_0000449486" description="E3 ubiquitin-protein ligase makorin">
    <location>
        <begin position="1"/>
        <end position="413"/>
    </location>
</feature>
<feature type="zinc finger region" description="C3H1-type 1" evidence="3">
    <location>
        <begin position="2"/>
        <end position="29"/>
    </location>
</feature>
<feature type="zinc finger region" description="C3H1-type 2" evidence="3">
    <location>
        <begin position="30"/>
        <end position="57"/>
    </location>
</feature>
<feature type="zinc finger region" description="C3H1-type 3" evidence="3">
    <location>
        <begin position="138"/>
        <end position="167"/>
    </location>
</feature>
<feature type="zinc finger region" description="RING-type" evidence="2">
    <location>
        <begin position="213"/>
        <end position="267"/>
    </location>
</feature>
<feature type="zinc finger region" description="C3H1-type 4" evidence="3">
    <location>
        <begin position="296"/>
        <end position="327"/>
    </location>
</feature>
<feature type="region of interest" description="Disordered" evidence="4">
    <location>
        <begin position="61"/>
        <end position="85"/>
    </location>
</feature>
<feature type="compositionally biased region" description="Low complexity" evidence="4">
    <location>
        <begin position="66"/>
        <end position="82"/>
    </location>
</feature>
<feature type="splice variant" id="VSP_060559" description="In isoform b." evidence="9">
    <original>EAPSSRRRP</original>
    <variation>TTSSKLTRN</variation>
    <location>
        <begin position="335"/>
        <end position="343"/>
    </location>
</feature>
<feature type="splice variant" id="VSP_060560" description="In isoform b." evidence="9">
    <location>
        <begin position="344"/>
        <end position="413"/>
    </location>
</feature>
<feature type="mutagenesis site" description="In sy68; impaired male mating behavior. Some hermaphrodites and males fail to exit the molting cycle and undergo an additional molt. Such males do not fully shed the molted cuticle and die by rupturing through the cloaca. Surviving males have no spicules or fan and the rays appear as finger-like processes. Disrupts tail tip morphogenesis resulting in retention of the pointed larval tail tip in adult males (also known as the Lep phenotype)." evidence="5">
    <original>C</original>
    <variation>Y</variation>
    <location>
        <position position="22"/>
    </location>
</feature>
<feature type="mutagenesis site" description="In bx147; impaired male mating behavior. Some hermaphrodites and males fail to exit the molting cycle and undergo an additional molt. Such males do not fully shed the molted cuticle and die by rupturing through the cloaca. Surviving males have no spicules or fan and the rays appear as finger-like processes. Disrupts tail tip morphogenesis resulting in retention of the pointed larval tail tip in adult males (also known as the Lep phenotype)." evidence="5">
    <original>H</original>
    <variation>N</variation>
    <location>
        <position position="26"/>
    </location>
</feature>
<gene>
    <name evidence="8 11" type="primary">lep-2</name>
    <name evidence="11" type="ORF">Y55F3AM.6</name>
</gene>
<organism evidence="10">
    <name type="scientific">Caenorhabditis elegans</name>
    <dbReference type="NCBI Taxonomy" id="6239"/>
    <lineage>
        <taxon>Eukaryota</taxon>
        <taxon>Metazoa</taxon>
        <taxon>Ecdysozoa</taxon>
        <taxon>Nematoda</taxon>
        <taxon>Chromadorea</taxon>
        <taxon>Rhabditida</taxon>
        <taxon>Rhabditina</taxon>
        <taxon>Rhabditomorpha</taxon>
        <taxon>Rhabditoidea</taxon>
        <taxon>Rhabditidae</taxon>
        <taxon>Peloderinae</taxon>
        <taxon>Caenorhabditis</taxon>
    </lineage>
</organism>
<reference evidence="10" key="1">
    <citation type="journal article" date="1998" name="Science">
        <title>Genome sequence of the nematode C. elegans: a platform for investigating biology.</title>
        <authorList>
            <consortium name="The C. elegans sequencing consortium"/>
        </authorList>
    </citation>
    <scope>NUCLEOTIDE SEQUENCE [LARGE SCALE GENOMIC DNA]</scope>
    <source>
        <strain evidence="10">Bristol N2</strain>
    </source>
</reference>
<reference evidence="9" key="2">
    <citation type="journal article" date="2016" name="Development">
        <title>Makorin ortholog LEP-2 regulates LIN-28 stability to promote the juvenile-to-adult transition in Caenorhabditis elegans.</title>
        <authorList>
            <person name="Herrera R.A."/>
            <person name="Kiontke K."/>
            <person name="Fitch D.H."/>
        </authorList>
    </citation>
    <scope>FUNCTION</scope>
    <scope>SUBCELLULAR LOCATION</scope>
    <scope>TISSUE SPECIFICITY</scope>
    <scope>DEVELOPMENTAL STAGE</scope>
    <scope>MUTAGENESIS OF CYS-22 AND HIS-26</scope>
</reference>
<reference evidence="9" key="3">
    <citation type="journal article" date="2019" name="Dev. Cell">
        <title>The Long Non-Coding RNA lep-5 Promotes the Juvenile-to-Adult Transition by Destabilizing LIN-28.</title>
        <authorList>
            <person name="Kiontke K.C."/>
            <person name="Herrera R.A."/>
            <person name="Vuong E."/>
            <person name="Luo J."/>
            <person name="Schwarz E.M."/>
            <person name="Fitch D.H.A."/>
            <person name="Portman D.S."/>
        </authorList>
    </citation>
    <scope>FUNCTION</scope>
    <scope>IDENTIFICATION IN COMPLEX WITH LIN-28</scope>
</reference>
<reference evidence="9" key="4">
    <citation type="journal article" date="2019" name="Elife">
        <title>The Makorin lep-2 and the lncRNA lep-5 regulate lin-28 to schedule sexual maturation of the C. elegans nervous system.</title>
        <authorList>
            <person name="Lawson H."/>
            <person name="Vuong E."/>
            <person name="Miller R.M."/>
            <person name="Kiontke K."/>
            <person name="Fitch D.H."/>
            <person name="Portman D.S."/>
        </authorList>
    </citation>
    <scope>FUNCTION</scope>
    <scope>TISSUE SPECIFICITY</scope>
    <scope>DEVELOPMENTAL STAGE</scope>
</reference>
<proteinExistence type="evidence at protein level"/>
<evidence type="ECO:0000250" key="1">
    <source>
        <dbReference type="UniProtKB" id="Q9UHC7"/>
    </source>
</evidence>
<evidence type="ECO:0000255" key="2">
    <source>
        <dbReference type="PROSITE-ProRule" id="PRU00175"/>
    </source>
</evidence>
<evidence type="ECO:0000255" key="3">
    <source>
        <dbReference type="PROSITE-ProRule" id="PRU00723"/>
    </source>
</evidence>
<evidence type="ECO:0000256" key="4">
    <source>
        <dbReference type="SAM" id="MobiDB-lite"/>
    </source>
</evidence>
<evidence type="ECO:0000269" key="5">
    <source>
    </source>
</evidence>
<evidence type="ECO:0000269" key="6">
    <source>
    </source>
</evidence>
<evidence type="ECO:0000269" key="7">
    <source>
    </source>
</evidence>
<evidence type="ECO:0000303" key="8">
    <source>
    </source>
</evidence>
<evidence type="ECO:0000305" key="9"/>
<evidence type="ECO:0000312" key="10">
    <source>
        <dbReference type="Proteomes" id="UP000001940"/>
    </source>
</evidence>
<evidence type="ECO:0000312" key="11">
    <source>
        <dbReference type="WormBase" id="Y55F3AM.6a"/>
    </source>
</evidence>
<evidence type="ECO:0000312" key="12">
    <source>
        <dbReference type="WormBase" id="Y55F3AM.6b"/>
    </source>
</evidence>
<comment type="function">
    <text evidence="1 5 6 7">E3 ubiquitin ligase which catalyzes the covalent attachment of ubiquitin moieties onto substrate proteins (By similarity). Promotes the larval to adult transition by binding to the long non-coding RNA lep-5 to target the heterochronic protein lin-28 for degradation by the proteasome (PubMed:26811380, PubMed:30956008). This association and degradation of lin-28 also controls the timing of the sexual differentiation of individual neurons in males including the AIM, AWA, ADF, ASJ and CEM neurons (PubMed:31264582). Plays a role in governing the developmental timing of male tail tip morphogenesis (PubMed:26811380). Plays a role in two aspects of male mating behavior: response to hermaphrodite contact and vulva location (PubMed:26811380, PubMed:31264582). May play a role in the detection of preferred food sources (PubMed:31264582).</text>
</comment>
<comment type="catalytic activity">
    <reaction evidence="1">
        <text>S-ubiquitinyl-[E2 ubiquitin-conjugating enzyme]-L-cysteine + [acceptor protein]-L-lysine = [E2 ubiquitin-conjugating enzyme]-L-cysteine + N(6)-ubiquitinyl-[acceptor protein]-L-lysine.</text>
        <dbReference type="EC" id="2.3.2.27"/>
    </reaction>
</comment>
<comment type="pathway">
    <text evidence="9">Protein modification; protein ubiquitination.</text>
</comment>
<comment type="subunit">
    <text evidence="6">Component of a complex at least containing lep-2, lin-28 and the long non-coding RNA lep-5, which mediates the degradation of lin-28.</text>
</comment>
<comment type="subcellular location">
    <subcellularLocation>
        <location evidence="5">Cytoplasm</location>
    </subcellularLocation>
</comment>
<comment type="alternative products">
    <event type="alternative splicing"/>
    <isoform>
        <id>Q9N373-1</id>
        <name evidence="11">a</name>
        <sequence type="displayed"/>
    </isoform>
    <isoform>
        <id>Q9N373-2</id>
        <name evidence="12">b</name>
        <sequence type="described" ref="VSP_060559 VSP_060560"/>
    </isoform>
</comment>
<comment type="tissue specificity">
    <text evidence="5 7">Expressed in seam, tail tip, and other hypodermal cells, head and tail neurons, the pharynx, intestine and the developing hermaphrodite somatic gonad (PubMed:26811380, PubMed:31264582). Not expressed in body wall muscle cells (PubMed:26811380).</text>
</comment>
<comment type="developmental stage">
    <text evidence="5 7">Expressed from embryogenesis to adulthood (PubMed:26811380). Expressed in head neurons in L3 and L4 larvae (PubMed:31264582).</text>
</comment>
<name>MKRN_CAEEL</name>
<sequence>MPRHETDCRYFANGYCSKGNTCTFTHDVATRNENICHFNLVGKCSYGRACRFLHTRPRNDELPSCSTPQTSQNQQNLQNSGQRVRPKQLPELKFNAQAAEFVPRWKMPQRGPVTSYAGAAASADHGESSSSFQSSHEQAQLMMCPYHQKSGDCNRQDMDCPFAHGNYCDMCQQWSLHPYNAELRKKHENECVANHTTEMERAFLLQKTEQKTCGICMENIFEKNLRFGILNGCQHCFCLDCIRQWRSKDQENVELATKTVRSCPECRQHSDYVIPSLFWVESGQEKDLLIEMYKENTKRKICKYYSNERSRGACPFGNKCFYKHQLPDGSIDPGEAPSSRRRPRLVDFLFDDNSDSDEETFRRFQEEHEEEQEELLRFVAETLPEADEESELFRQITEVLRHYQISGHRRGFQ</sequence>
<dbReference type="EC" id="2.3.2.27" evidence="1"/>
<dbReference type="EMBL" id="BX284604">
    <property type="protein sequence ID" value="CCD74063.1"/>
    <property type="molecule type" value="Genomic_DNA"/>
</dbReference>
<dbReference type="EMBL" id="BX284604">
    <property type="protein sequence ID" value="CCD74064.1"/>
    <property type="molecule type" value="Genomic_DNA"/>
</dbReference>
<dbReference type="RefSeq" id="NP_001023510.1">
    <molecule id="Q9N373-1"/>
    <property type="nucleotide sequence ID" value="NM_001028339.6"/>
</dbReference>
<dbReference type="RefSeq" id="NP_001023511.1">
    <molecule id="Q9N373-2"/>
    <property type="nucleotide sequence ID" value="NM_001028340.6"/>
</dbReference>
<dbReference type="ComplexPortal" id="CPX-5081">
    <property type="entry name" value="lep-2-lep-5-lin-28 ubiquitin ligase complex"/>
</dbReference>
<dbReference type="FunCoup" id="Q9N373">
    <property type="interactions" value="2478"/>
</dbReference>
<dbReference type="IntAct" id="Q9N373">
    <property type="interactions" value="3"/>
</dbReference>
<dbReference type="STRING" id="6239.Y55F3AM.6a.2"/>
<dbReference type="PaxDb" id="6239-Y55F3AM.6a"/>
<dbReference type="PeptideAtlas" id="Q9N373"/>
<dbReference type="EnsemblMetazoa" id="Y55F3AM.6a.1">
    <molecule id="Q9N373-1"/>
    <property type="protein sequence ID" value="Y55F3AM.6a.1"/>
    <property type="gene ID" value="WBGene00002278"/>
</dbReference>
<dbReference type="EnsemblMetazoa" id="Y55F3AM.6b.1">
    <molecule id="Q9N373-2"/>
    <property type="protein sequence ID" value="Y55F3AM.6b.1"/>
    <property type="gene ID" value="WBGene00002278"/>
</dbReference>
<dbReference type="GeneID" id="176918"/>
<dbReference type="KEGG" id="cel:CELE_Y55F3AM.6"/>
<dbReference type="UCSC" id="Y55F3AM.6a">
    <molecule id="Q9N373-1"/>
    <property type="organism name" value="c. elegans"/>
</dbReference>
<dbReference type="AGR" id="WB:WBGene00002278"/>
<dbReference type="CTD" id="176918"/>
<dbReference type="WormBase" id="Y55F3AM.6a">
    <molecule id="Q9N373-1"/>
    <property type="protein sequence ID" value="CE25488"/>
    <property type="gene ID" value="WBGene00002278"/>
    <property type="gene designation" value="lep-2"/>
</dbReference>
<dbReference type="WormBase" id="Y55F3AM.6b">
    <molecule id="Q9N373-2"/>
    <property type="protein sequence ID" value="CE33891"/>
    <property type="gene ID" value="WBGene00002278"/>
    <property type="gene designation" value="lep-2"/>
</dbReference>
<dbReference type="eggNOG" id="KOG1039">
    <property type="taxonomic scope" value="Eukaryota"/>
</dbReference>
<dbReference type="GeneTree" id="ENSGT00950000183077"/>
<dbReference type="HOGENOM" id="CLU_040815_4_2_1"/>
<dbReference type="InParanoid" id="Q9N373"/>
<dbReference type="OMA" id="CRYFANN"/>
<dbReference type="OrthoDB" id="411372at2759"/>
<dbReference type="PhylomeDB" id="Q9N373"/>
<dbReference type="Reactome" id="R-CEL-198323">
    <property type="pathway name" value="AKT phosphorylates targets in the cytosol"/>
</dbReference>
<dbReference type="Reactome" id="R-CEL-8948751">
    <property type="pathway name" value="Regulation of PTEN stability and activity"/>
</dbReference>
<dbReference type="Reactome" id="R-CEL-983168">
    <property type="pathway name" value="Antigen processing: Ubiquitination &amp; Proteasome degradation"/>
</dbReference>
<dbReference type="UniPathway" id="UPA00143"/>
<dbReference type="PRO" id="PR:Q9N373"/>
<dbReference type="Proteomes" id="UP000001940">
    <property type="component" value="Chromosome IV"/>
</dbReference>
<dbReference type="Bgee" id="WBGene00002278">
    <property type="expression patterns" value="Expressed in embryo and 4 other cell types or tissues"/>
</dbReference>
<dbReference type="GO" id="GO:0005737">
    <property type="term" value="C:cytoplasm"/>
    <property type="evidence" value="ECO:0007669"/>
    <property type="project" value="UniProtKB-SubCell"/>
</dbReference>
<dbReference type="GO" id="GO:0000151">
    <property type="term" value="C:ubiquitin ligase complex"/>
    <property type="evidence" value="ECO:0000303"/>
    <property type="project" value="ComplexPortal"/>
</dbReference>
<dbReference type="GO" id="GO:0003723">
    <property type="term" value="F:RNA binding"/>
    <property type="evidence" value="ECO:0007669"/>
    <property type="project" value="UniProtKB-KW"/>
</dbReference>
<dbReference type="GO" id="GO:0061630">
    <property type="term" value="F:ubiquitin protein ligase activity"/>
    <property type="evidence" value="ECO:0000318"/>
    <property type="project" value="GO_Central"/>
</dbReference>
<dbReference type="GO" id="GO:0008270">
    <property type="term" value="F:zinc ion binding"/>
    <property type="evidence" value="ECO:0007669"/>
    <property type="project" value="UniProtKB-KW"/>
</dbReference>
<dbReference type="GO" id="GO:0002119">
    <property type="term" value="P:nematode larval development"/>
    <property type="evidence" value="ECO:0000303"/>
    <property type="project" value="ComplexPortal"/>
</dbReference>
<dbReference type="GO" id="GO:0042551">
    <property type="term" value="P:neuron maturation"/>
    <property type="evidence" value="ECO:0000303"/>
    <property type="project" value="ComplexPortal"/>
</dbReference>
<dbReference type="GO" id="GO:0000209">
    <property type="term" value="P:protein polyubiquitination"/>
    <property type="evidence" value="ECO:0007669"/>
    <property type="project" value="InterPro"/>
</dbReference>
<dbReference type="GO" id="GO:0016567">
    <property type="term" value="P:protein ubiquitination"/>
    <property type="evidence" value="ECO:0000318"/>
    <property type="project" value="GO_Central"/>
</dbReference>
<dbReference type="GO" id="GO:0007548">
    <property type="term" value="P:sex differentiation"/>
    <property type="evidence" value="ECO:0007669"/>
    <property type="project" value="UniProtKB-KW"/>
</dbReference>
<dbReference type="GO" id="GO:0006511">
    <property type="term" value="P:ubiquitin-dependent protein catabolic process"/>
    <property type="evidence" value="ECO:0000303"/>
    <property type="project" value="ComplexPortal"/>
</dbReference>
<dbReference type="CDD" id="cd16521">
    <property type="entry name" value="RING-HC_MKRN"/>
    <property type="match status" value="1"/>
</dbReference>
<dbReference type="FunFam" id="3.30.40.10:FF:000117">
    <property type="entry name" value="Probable E3 ubiquitin-protein ligase makorin-1"/>
    <property type="match status" value="1"/>
</dbReference>
<dbReference type="Gene3D" id="4.10.1000.10">
    <property type="entry name" value="Zinc finger, CCCH-type"/>
    <property type="match status" value="1"/>
</dbReference>
<dbReference type="Gene3D" id="3.30.40.10">
    <property type="entry name" value="Zinc/RING finger domain, C3HC4 (zinc finger)"/>
    <property type="match status" value="1"/>
</dbReference>
<dbReference type="InterPro" id="IPR045072">
    <property type="entry name" value="MKRN-like"/>
</dbReference>
<dbReference type="InterPro" id="IPR000571">
    <property type="entry name" value="Znf_CCCH"/>
</dbReference>
<dbReference type="InterPro" id="IPR036855">
    <property type="entry name" value="Znf_CCCH_sf"/>
</dbReference>
<dbReference type="InterPro" id="IPR001841">
    <property type="entry name" value="Znf_RING"/>
</dbReference>
<dbReference type="InterPro" id="IPR013083">
    <property type="entry name" value="Znf_RING/FYVE/PHD"/>
</dbReference>
<dbReference type="InterPro" id="IPR017907">
    <property type="entry name" value="Znf_RING_CS"/>
</dbReference>
<dbReference type="PANTHER" id="PTHR11224:SF10">
    <property type="entry name" value="IP09428P-RELATED"/>
    <property type="match status" value="1"/>
</dbReference>
<dbReference type="PANTHER" id="PTHR11224">
    <property type="entry name" value="MAKORIN-RELATED"/>
    <property type="match status" value="1"/>
</dbReference>
<dbReference type="Pfam" id="PF00642">
    <property type="entry name" value="zf-CCCH"/>
    <property type="match status" value="1"/>
</dbReference>
<dbReference type="Pfam" id="PF14608">
    <property type="entry name" value="zf-CCCH_2"/>
    <property type="match status" value="2"/>
</dbReference>
<dbReference type="SMART" id="SM00184">
    <property type="entry name" value="RING"/>
    <property type="match status" value="1"/>
</dbReference>
<dbReference type="SMART" id="SM00356">
    <property type="entry name" value="ZnF_C3H1"/>
    <property type="match status" value="4"/>
</dbReference>
<dbReference type="SUPFAM" id="SSF90229">
    <property type="entry name" value="CCCH zinc finger"/>
    <property type="match status" value="1"/>
</dbReference>
<dbReference type="SUPFAM" id="SSF57850">
    <property type="entry name" value="RING/U-box"/>
    <property type="match status" value="1"/>
</dbReference>
<dbReference type="PROSITE" id="PS50103">
    <property type="entry name" value="ZF_C3H1"/>
    <property type="match status" value="4"/>
</dbReference>
<dbReference type="PROSITE" id="PS00518">
    <property type="entry name" value="ZF_RING_1"/>
    <property type="match status" value="1"/>
</dbReference>
<dbReference type="PROSITE" id="PS50089">
    <property type="entry name" value="ZF_RING_2"/>
    <property type="match status" value="1"/>
</dbReference>
<keyword id="KW-0025">Alternative splicing</keyword>
<keyword id="KW-0963">Cytoplasm</keyword>
<keyword id="KW-0221">Differentiation</keyword>
<keyword id="KW-0479">Metal-binding</keyword>
<keyword id="KW-1185">Reference proteome</keyword>
<keyword id="KW-0677">Repeat</keyword>
<keyword id="KW-0694">RNA-binding</keyword>
<keyword id="KW-0726">Sexual differentiation</keyword>
<keyword id="KW-0808">Transferase</keyword>
<keyword id="KW-0833">Ubl conjugation pathway</keyword>
<keyword id="KW-0862">Zinc</keyword>
<keyword id="KW-0863">Zinc-finger</keyword>
<accession>Q9N373</accession>
<accession>H2L0R6</accession>
<protein>
    <recommendedName>
        <fullName evidence="8">E3 ubiquitin-protein ligase makorin</fullName>
        <ecNumber evidence="1">2.3.2.27</ecNumber>
    </recommendedName>
    <alternativeName>
        <fullName evidence="11">Leptoderan male tail protein 2</fullName>
    </alternativeName>
    <alternativeName>
        <fullName evidence="9">RING-type E3 ubiquitin transferase makorin</fullName>
    </alternativeName>
</protein>